<reference key="1">
    <citation type="journal article" date="2005" name="Nucleic Acids Res.">
        <title>Genome dynamics and diversity of Shigella species, the etiologic agents of bacillary dysentery.</title>
        <authorList>
            <person name="Yang F."/>
            <person name="Yang J."/>
            <person name="Zhang X."/>
            <person name="Chen L."/>
            <person name="Jiang Y."/>
            <person name="Yan Y."/>
            <person name="Tang X."/>
            <person name="Wang J."/>
            <person name="Xiong Z."/>
            <person name="Dong J."/>
            <person name="Xue Y."/>
            <person name="Zhu Y."/>
            <person name="Xu X."/>
            <person name="Sun L."/>
            <person name="Chen S."/>
            <person name="Nie H."/>
            <person name="Peng J."/>
            <person name="Xu J."/>
            <person name="Wang Y."/>
            <person name="Yuan Z."/>
            <person name="Wen Y."/>
            <person name="Yao Z."/>
            <person name="Shen Y."/>
            <person name="Qiang B."/>
            <person name="Hou Y."/>
            <person name="Yu J."/>
            <person name="Jin Q."/>
        </authorList>
    </citation>
    <scope>NUCLEOTIDE SEQUENCE [LARGE SCALE GENOMIC DNA]</scope>
    <source>
        <strain>Sb227</strain>
    </source>
</reference>
<organism>
    <name type="scientific">Shigella boydii serotype 4 (strain Sb227)</name>
    <dbReference type="NCBI Taxonomy" id="300268"/>
    <lineage>
        <taxon>Bacteria</taxon>
        <taxon>Pseudomonadati</taxon>
        <taxon>Pseudomonadota</taxon>
        <taxon>Gammaproteobacteria</taxon>
        <taxon>Enterobacterales</taxon>
        <taxon>Enterobacteriaceae</taxon>
        <taxon>Shigella</taxon>
    </lineage>
</organism>
<dbReference type="EC" id="4.2.1.32"/>
<dbReference type="EMBL" id="CP000036">
    <property type="protein sequence ID" value="ABB67435.1"/>
    <property type="molecule type" value="Genomic_DNA"/>
</dbReference>
<dbReference type="RefSeq" id="WP_000986797.1">
    <property type="nucleotide sequence ID" value="NC_007613.1"/>
</dbReference>
<dbReference type="SMR" id="Q31WX3"/>
<dbReference type="GeneID" id="93778932"/>
<dbReference type="KEGG" id="sbo:SBO_2919"/>
<dbReference type="HOGENOM" id="CLU_041245_1_0_6"/>
<dbReference type="Proteomes" id="UP000007067">
    <property type="component" value="Chromosome"/>
</dbReference>
<dbReference type="GO" id="GO:0051539">
    <property type="term" value="F:4 iron, 4 sulfur cluster binding"/>
    <property type="evidence" value="ECO:0007669"/>
    <property type="project" value="UniProtKB-KW"/>
</dbReference>
<dbReference type="GO" id="GO:0008730">
    <property type="term" value="F:L(+)-tartrate dehydratase activity"/>
    <property type="evidence" value="ECO:0007669"/>
    <property type="project" value="UniProtKB-EC"/>
</dbReference>
<dbReference type="GO" id="GO:0046872">
    <property type="term" value="F:metal ion binding"/>
    <property type="evidence" value="ECO:0007669"/>
    <property type="project" value="UniProtKB-KW"/>
</dbReference>
<dbReference type="InterPro" id="IPR051208">
    <property type="entry name" value="Class-I_Fumarase/Tartrate_DH"/>
</dbReference>
<dbReference type="InterPro" id="IPR004646">
    <property type="entry name" value="Fe-S_hydro-lyase_TtdA-typ_cat"/>
</dbReference>
<dbReference type="NCBIfam" id="NF006084">
    <property type="entry name" value="PRK08230.1"/>
    <property type="match status" value="1"/>
</dbReference>
<dbReference type="NCBIfam" id="TIGR00722">
    <property type="entry name" value="ttdA_fumA_fumB"/>
    <property type="match status" value="1"/>
</dbReference>
<dbReference type="PANTHER" id="PTHR30389">
    <property type="entry name" value="FUMARATE HYDRATASE-RELATED"/>
    <property type="match status" value="1"/>
</dbReference>
<dbReference type="PANTHER" id="PTHR30389:SF19">
    <property type="entry name" value="L(+)-TARTRATE DEHYDRATASE SUBUNIT ALPHA"/>
    <property type="match status" value="1"/>
</dbReference>
<dbReference type="Pfam" id="PF05681">
    <property type="entry name" value="Fumerase"/>
    <property type="match status" value="1"/>
</dbReference>
<accession>Q31WX3</accession>
<feature type="chain" id="PRO_0000262700" description="L(+)-tartrate dehydratase subunit alpha">
    <location>
        <begin position="1"/>
        <end position="303"/>
    </location>
</feature>
<feature type="binding site" evidence="2">
    <location>
        <position position="71"/>
    </location>
    <ligand>
        <name>iron-sulfur cluster</name>
        <dbReference type="ChEBI" id="CHEBI:30408"/>
    </ligand>
</feature>
<feature type="binding site" evidence="2">
    <location>
        <position position="190"/>
    </location>
    <ligand>
        <name>iron-sulfur cluster</name>
        <dbReference type="ChEBI" id="CHEBI:30408"/>
    </ligand>
</feature>
<feature type="binding site" evidence="2">
    <location>
        <position position="277"/>
    </location>
    <ligand>
        <name>iron-sulfur cluster</name>
        <dbReference type="ChEBI" id="CHEBI:30408"/>
    </ligand>
</feature>
<evidence type="ECO:0000250" key="1"/>
<evidence type="ECO:0000250" key="2">
    <source>
        <dbReference type="UniProtKB" id="E9AE57"/>
    </source>
</evidence>
<evidence type="ECO:0000250" key="3">
    <source>
        <dbReference type="UniProtKB" id="P05847"/>
    </source>
</evidence>
<evidence type="ECO:0000305" key="4"/>
<protein>
    <recommendedName>
        <fullName>L(+)-tartrate dehydratase subunit alpha</fullName>
        <shortName>L-TTD alpha</shortName>
        <ecNumber>4.2.1.32</ecNumber>
    </recommendedName>
</protein>
<name>TTDA_SHIBS</name>
<sequence>MMSESNKQQAVNKLTEIVANFTAMISTRMPDDVVDKLKQLKDAETSSMGKIIYHTMFDNMQKAIDLNRPACQDTGEIMFFVKVGSRFPLLGELQSILKQAVEEATVKAPLRHNAVEIFDEVNTGKNTGSGVPWVTWDIIPDNDDAEIEVYMAGGGCTLPGRSKVLMPSEGYEGVVKFVFENISTLAVNACPPVLVGVGIATSVETAAVLSRKAILRPIGSRHPNPKAAELELRLEEGLNRLGIGPQGLTGNSSVMGVHIESAARHPSTIGVAVSTGCWAHRRGTLLVHADLTFENLSHTRSAL</sequence>
<keyword id="KW-0004">4Fe-4S</keyword>
<keyword id="KW-0408">Iron</keyword>
<keyword id="KW-0411">Iron-sulfur</keyword>
<keyword id="KW-0456">Lyase</keyword>
<keyword id="KW-0479">Metal-binding</keyword>
<gene>
    <name type="primary">ttdA</name>
    <name type="ordered locus">SBO_2919</name>
</gene>
<comment type="catalytic activity">
    <reaction>
        <text>(2R,3R)-tartrate = oxaloacetate + H2O</text>
        <dbReference type="Rhea" id="RHEA:15413"/>
        <dbReference type="ChEBI" id="CHEBI:15377"/>
        <dbReference type="ChEBI" id="CHEBI:16452"/>
        <dbReference type="ChEBI" id="CHEBI:30924"/>
        <dbReference type="EC" id="4.2.1.32"/>
    </reaction>
</comment>
<comment type="cofactor">
    <cofactor evidence="3">
        <name>iron-sulfur cluster</name>
        <dbReference type="ChEBI" id="CHEBI:30408"/>
    </cofactor>
</comment>
<comment type="subunit">
    <text evidence="1">Tetramer of two alpha and two beta subunits.</text>
</comment>
<comment type="similarity">
    <text evidence="4">Belongs to the class-I fumarase family.</text>
</comment>
<proteinExistence type="inferred from homology"/>